<accession>A6U5E0</accession>
<gene>
    <name evidence="1" type="primary">rph</name>
    <name type="ordered locus">Smed_0010</name>
</gene>
<evidence type="ECO:0000255" key="1">
    <source>
        <dbReference type="HAMAP-Rule" id="MF_00564"/>
    </source>
</evidence>
<dbReference type="EC" id="2.7.7.56" evidence="1"/>
<dbReference type="EMBL" id="CP000738">
    <property type="protein sequence ID" value="ABR58870.1"/>
    <property type="molecule type" value="Genomic_DNA"/>
</dbReference>
<dbReference type="RefSeq" id="WP_011974225.1">
    <property type="nucleotide sequence ID" value="NC_009636.1"/>
</dbReference>
<dbReference type="RefSeq" id="YP_001325705.1">
    <property type="nucleotide sequence ID" value="NC_009636.1"/>
</dbReference>
<dbReference type="SMR" id="A6U5E0"/>
<dbReference type="STRING" id="366394.Smed_0010"/>
<dbReference type="GeneID" id="61611138"/>
<dbReference type="KEGG" id="smd:Smed_0010"/>
<dbReference type="PATRIC" id="fig|366394.8.peg.3065"/>
<dbReference type="eggNOG" id="COG0689">
    <property type="taxonomic scope" value="Bacteria"/>
</dbReference>
<dbReference type="HOGENOM" id="CLU_050858_0_0_5"/>
<dbReference type="OrthoDB" id="9802265at2"/>
<dbReference type="Proteomes" id="UP000001108">
    <property type="component" value="Chromosome"/>
</dbReference>
<dbReference type="GO" id="GO:0000175">
    <property type="term" value="F:3'-5'-RNA exonuclease activity"/>
    <property type="evidence" value="ECO:0007669"/>
    <property type="project" value="UniProtKB-UniRule"/>
</dbReference>
<dbReference type="GO" id="GO:0000049">
    <property type="term" value="F:tRNA binding"/>
    <property type="evidence" value="ECO:0007669"/>
    <property type="project" value="UniProtKB-UniRule"/>
</dbReference>
<dbReference type="GO" id="GO:0009022">
    <property type="term" value="F:tRNA nucleotidyltransferase activity"/>
    <property type="evidence" value="ECO:0007669"/>
    <property type="project" value="UniProtKB-UniRule"/>
</dbReference>
<dbReference type="GO" id="GO:0016075">
    <property type="term" value="P:rRNA catabolic process"/>
    <property type="evidence" value="ECO:0007669"/>
    <property type="project" value="UniProtKB-UniRule"/>
</dbReference>
<dbReference type="GO" id="GO:0006364">
    <property type="term" value="P:rRNA processing"/>
    <property type="evidence" value="ECO:0007669"/>
    <property type="project" value="UniProtKB-KW"/>
</dbReference>
<dbReference type="GO" id="GO:0008033">
    <property type="term" value="P:tRNA processing"/>
    <property type="evidence" value="ECO:0007669"/>
    <property type="project" value="UniProtKB-UniRule"/>
</dbReference>
<dbReference type="CDD" id="cd11362">
    <property type="entry name" value="RNase_PH_bact"/>
    <property type="match status" value="1"/>
</dbReference>
<dbReference type="FunFam" id="3.30.230.70:FF:000003">
    <property type="entry name" value="Ribonuclease PH"/>
    <property type="match status" value="1"/>
</dbReference>
<dbReference type="Gene3D" id="3.30.230.70">
    <property type="entry name" value="GHMP Kinase, N-terminal domain"/>
    <property type="match status" value="1"/>
</dbReference>
<dbReference type="HAMAP" id="MF_00564">
    <property type="entry name" value="RNase_PH"/>
    <property type="match status" value="1"/>
</dbReference>
<dbReference type="InterPro" id="IPR001247">
    <property type="entry name" value="ExoRNase_PH_dom1"/>
</dbReference>
<dbReference type="InterPro" id="IPR015847">
    <property type="entry name" value="ExoRNase_PH_dom2"/>
</dbReference>
<dbReference type="InterPro" id="IPR036345">
    <property type="entry name" value="ExoRNase_PH_dom2_sf"/>
</dbReference>
<dbReference type="InterPro" id="IPR027408">
    <property type="entry name" value="PNPase/RNase_PH_dom_sf"/>
</dbReference>
<dbReference type="InterPro" id="IPR020568">
    <property type="entry name" value="Ribosomal_Su5_D2-typ_SF"/>
</dbReference>
<dbReference type="InterPro" id="IPR050080">
    <property type="entry name" value="RNase_PH"/>
</dbReference>
<dbReference type="InterPro" id="IPR002381">
    <property type="entry name" value="RNase_PH_bac-type"/>
</dbReference>
<dbReference type="InterPro" id="IPR018336">
    <property type="entry name" value="RNase_PH_CS"/>
</dbReference>
<dbReference type="NCBIfam" id="TIGR01966">
    <property type="entry name" value="RNasePH"/>
    <property type="match status" value="1"/>
</dbReference>
<dbReference type="PANTHER" id="PTHR11953">
    <property type="entry name" value="EXOSOME COMPLEX COMPONENT"/>
    <property type="match status" value="1"/>
</dbReference>
<dbReference type="PANTHER" id="PTHR11953:SF0">
    <property type="entry name" value="EXOSOME COMPLEX COMPONENT RRP41"/>
    <property type="match status" value="1"/>
</dbReference>
<dbReference type="Pfam" id="PF01138">
    <property type="entry name" value="RNase_PH"/>
    <property type="match status" value="1"/>
</dbReference>
<dbReference type="Pfam" id="PF03725">
    <property type="entry name" value="RNase_PH_C"/>
    <property type="match status" value="1"/>
</dbReference>
<dbReference type="SUPFAM" id="SSF55666">
    <property type="entry name" value="Ribonuclease PH domain 2-like"/>
    <property type="match status" value="1"/>
</dbReference>
<dbReference type="SUPFAM" id="SSF54211">
    <property type="entry name" value="Ribosomal protein S5 domain 2-like"/>
    <property type="match status" value="1"/>
</dbReference>
<dbReference type="PROSITE" id="PS01277">
    <property type="entry name" value="RIBONUCLEASE_PH"/>
    <property type="match status" value="1"/>
</dbReference>
<comment type="function">
    <text evidence="1">Phosphorolytic 3'-5' exoribonuclease that plays an important role in tRNA 3'-end maturation. Removes nucleotide residues following the 3'-CCA terminus of tRNAs; can also add nucleotides to the ends of RNA molecules by using nucleoside diphosphates as substrates, but this may not be physiologically important. Probably plays a role in initiation of 16S rRNA degradation (leading to ribosome degradation) during starvation.</text>
</comment>
<comment type="catalytic activity">
    <reaction evidence="1">
        <text>tRNA(n+1) + phosphate = tRNA(n) + a ribonucleoside 5'-diphosphate</text>
        <dbReference type="Rhea" id="RHEA:10628"/>
        <dbReference type="Rhea" id="RHEA-COMP:17343"/>
        <dbReference type="Rhea" id="RHEA-COMP:17344"/>
        <dbReference type="ChEBI" id="CHEBI:43474"/>
        <dbReference type="ChEBI" id="CHEBI:57930"/>
        <dbReference type="ChEBI" id="CHEBI:173114"/>
        <dbReference type="EC" id="2.7.7.56"/>
    </reaction>
</comment>
<comment type="subunit">
    <text evidence="1">Homohexameric ring arranged as a trimer of dimers.</text>
</comment>
<comment type="similarity">
    <text evidence="1">Belongs to the RNase PH family.</text>
</comment>
<feature type="chain" id="PRO_1000024895" description="Ribonuclease PH">
    <location>
        <begin position="1"/>
        <end position="239"/>
    </location>
</feature>
<feature type="binding site" evidence="1">
    <location>
        <position position="86"/>
    </location>
    <ligand>
        <name>phosphate</name>
        <dbReference type="ChEBI" id="CHEBI:43474"/>
        <note>substrate</note>
    </ligand>
</feature>
<feature type="binding site" evidence="1">
    <location>
        <begin position="124"/>
        <end position="126"/>
    </location>
    <ligand>
        <name>phosphate</name>
        <dbReference type="ChEBI" id="CHEBI:43474"/>
        <note>substrate</note>
    </ligand>
</feature>
<reference key="1">
    <citation type="submission" date="2007-06" db="EMBL/GenBank/DDBJ databases">
        <title>Complete sequence of Sinorhizobium medicae WSM419 chromosome.</title>
        <authorList>
            <consortium name="US DOE Joint Genome Institute"/>
            <person name="Copeland A."/>
            <person name="Lucas S."/>
            <person name="Lapidus A."/>
            <person name="Barry K."/>
            <person name="Glavina del Rio T."/>
            <person name="Dalin E."/>
            <person name="Tice H."/>
            <person name="Pitluck S."/>
            <person name="Chain P."/>
            <person name="Malfatti S."/>
            <person name="Shin M."/>
            <person name="Vergez L."/>
            <person name="Schmutz J."/>
            <person name="Larimer F."/>
            <person name="Land M."/>
            <person name="Hauser L."/>
            <person name="Kyrpides N."/>
            <person name="Mikhailova N."/>
            <person name="Reeve W.G."/>
            <person name="Richardson P."/>
        </authorList>
    </citation>
    <scope>NUCLEOTIDE SEQUENCE [LARGE SCALE GENOMIC DNA]</scope>
    <source>
        <strain>WSM419</strain>
    </source>
</reference>
<sequence length="239" mass="26015">MRPSGRKTDQMRKVSFERNFSKHAEGSCLVRFGDTHVLCTASLEDKVPGWLRNGGKGWVTAEYGMLPRATGERMRREASAGKQSGRTQEIQRLIGRSLRAVVDLPALGERQISVDCDVIQADGGTRTASITGAWIALHDCLKWMEARNMVKLEKVLKDHVAAISCGIFASQPVVDLDYLEDSAAETDANFVMTGSGGLVEIQGTAEGKPFSEEEFASLMLLAKNGIAELIEMQKLAIAG</sequence>
<protein>
    <recommendedName>
        <fullName evidence="1">Ribonuclease PH</fullName>
        <shortName evidence="1">RNase PH</shortName>
        <ecNumber evidence="1">2.7.7.56</ecNumber>
    </recommendedName>
    <alternativeName>
        <fullName evidence="1">tRNA nucleotidyltransferase</fullName>
    </alternativeName>
</protein>
<proteinExistence type="inferred from homology"/>
<keyword id="KW-0548">Nucleotidyltransferase</keyword>
<keyword id="KW-0694">RNA-binding</keyword>
<keyword id="KW-0698">rRNA processing</keyword>
<keyword id="KW-0808">Transferase</keyword>
<keyword id="KW-0819">tRNA processing</keyword>
<keyword id="KW-0820">tRNA-binding</keyword>
<organism>
    <name type="scientific">Sinorhizobium medicae (strain WSM419)</name>
    <name type="common">Ensifer medicae</name>
    <dbReference type="NCBI Taxonomy" id="366394"/>
    <lineage>
        <taxon>Bacteria</taxon>
        <taxon>Pseudomonadati</taxon>
        <taxon>Pseudomonadota</taxon>
        <taxon>Alphaproteobacteria</taxon>
        <taxon>Hyphomicrobiales</taxon>
        <taxon>Rhizobiaceae</taxon>
        <taxon>Sinorhizobium/Ensifer group</taxon>
        <taxon>Sinorhizobium</taxon>
    </lineage>
</organism>
<name>RNPH_SINMW</name>